<gene>
    <name evidence="1" type="primary">fdhD</name>
    <name type="ordered locus">ECH74115_5346</name>
</gene>
<dbReference type="EMBL" id="CP001164">
    <property type="protein sequence ID" value="ACI37442.1"/>
    <property type="molecule type" value="Genomic_DNA"/>
</dbReference>
<dbReference type="RefSeq" id="WP_000753589.1">
    <property type="nucleotide sequence ID" value="NC_011353.1"/>
</dbReference>
<dbReference type="SMR" id="B5YZ31"/>
<dbReference type="GeneID" id="75174135"/>
<dbReference type="KEGG" id="ecf:ECH74115_5346"/>
<dbReference type="HOGENOM" id="CLU_056887_2_0_6"/>
<dbReference type="GO" id="GO:0005737">
    <property type="term" value="C:cytoplasm"/>
    <property type="evidence" value="ECO:0007669"/>
    <property type="project" value="UniProtKB-SubCell"/>
</dbReference>
<dbReference type="GO" id="GO:0097163">
    <property type="term" value="F:sulfur carrier activity"/>
    <property type="evidence" value="ECO:0007669"/>
    <property type="project" value="UniProtKB-UniRule"/>
</dbReference>
<dbReference type="GO" id="GO:0016783">
    <property type="term" value="F:sulfurtransferase activity"/>
    <property type="evidence" value="ECO:0007669"/>
    <property type="project" value="InterPro"/>
</dbReference>
<dbReference type="GO" id="GO:0006777">
    <property type="term" value="P:Mo-molybdopterin cofactor biosynthetic process"/>
    <property type="evidence" value="ECO:0007669"/>
    <property type="project" value="UniProtKB-UniRule"/>
</dbReference>
<dbReference type="FunFam" id="3.10.20.10:FF:000003">
    <property type="entry name" value="Sulfur carrier protein FdhD"/>
    <property type="match status" value="1"/>
</dbReference>
<dbReference type="FunFam" id="3.40.140.10:FF:000027">
    <property type="entry name" value="Sulfur carrier protein FdhD"/>
    <property type="match status" value="1"/>
</dbReference>
<dbReference type="Gene3D" id="3.10.20.10">
    <property type="match status" value="1"/>
</dbReference>
<dbReference type="Gene3D" id="3.40.140.10">
    <property type="entry name" value="Cytidine Deaminase, domain 2"/>
    <property type="match status" value="1"/>
</dbReference>
<dbReference type="HAMAP" id="MF_00187">
    <property type="entry name" value="FdhD"/>
    <property type="match status" value="1"/>
</dbReference>
<dbReference type="InterPro" id="IPR016193">
    <property type="entry name" value="Cytidine_deaminase-like"/>
</dbReference>
<dbReference type="InterPro" id="IPR003786">
    <property type="entry name" value="FdhD"/>
</dbReference>
<dbReference type="NCBIfam" id="TIGR00129">
    <property type="entry name" value="fdhD_narQ"/>
    <property type="match status" value="1"/>
</dbReference>
<dbReference type="PANTHER" id="PTHR30592">
    <property type="entry name" value="FORMATE DEHYDROGENASE"/>
    <property type="match status" value="1"/>
</dbReference>
<dbReference type="PANTHER" id="PTHR30592:SF1">
    <property type="entry name" value="SULFUR CARRIER PROTEIN FDHD"/>
    <property type="match status" value="1"/>
</dbReference>
<dbReference type="Pfam" id="PF02634">
    <property type="entry name" value="FdhD-NarQ"/>
    <property type="match status" value="1"/>
</dbReference>
<dbReference type="PIRSF" id="PIRSF015626">
    <property type="entry name" value="FdhD"/>
    <property type="match status" value="1"/>
</dbReference>
<dbReference type="SUPFAM" id="SSF53927">
    <property type="entry name" value="Cytidine deaminase-like"/>
    <property type="match status" value="1"/>
</dbReference>
<feature type="chain" id="PRO_1000098781" description="Sulfur carrier protein FdhD">
    <location>
        <begin position="1"/>
        <end position="277"/>
    </location>
</feature>
<feature type="active site" description="Cysteine persulfide intermediate" evidence="1">
    <location>
        <position position="121"/>
    </location>
</feature>
<feature type="binding site" evidence="1">
    <location>
        <begin position="260"/>
        <end position="265"/>
    </location>
    <ligand>
        <name>Mo-bis(molybdopterin guanine dinucleotide)</name>
        <dbReference type="ChEBI" id="CHEBI:60539"/>
    </ligand>
</feature>
<organism>
    <name type="scientific">Escherichia coli O157:H7 (strain EC4115 / EHEC)</name>
    <dbReference type="NCBI Taxonomy" id="444450"/>
    <lineage>
        <taxon>Bacteria</taxon>
        <taxon>Pseudomonadati</taxon>
        <taxon>Pseudomonadota</taxon>
        <taxon>Gammaproteobacteria</taxon>
        <taxon>Enterobacterales</taxon>
        <taxon>Enterobacteriaceae</taxon>
        <taxon>Escherichia</taxon>
    </lineage>
</organism>
<sequence>MKKTQQKEIENVTNITGVRQIELWRRDDLQHPRLDEVAEEVPVALVYNGISHVVMMASPKDLEYFALGFSLSEGIIESPRDIFGMDVVPSCNGLEVQIELSSRRFMGLKERRRALAGRTGCGVCGVEQLNDIGKPVQPLPFTQTFDLNKLDDALRHLNDFQPVGQLTGCTHAAAWMLPSGELVGGHEDVGRHVALDKLLGRRSQEGESWQQGAVLVSSRASYEMVQKSAMCGVEILFAVSAATTLAVEVAERCNLTLVGFCKPGRATVYTHPQRLSN</sequence>
<evidence type="ECO:0000255" key="1">
    <source>
        <dbReference type="HAMAP-Rule" id="MF_00187"/>
    </source>
</evidence>
<comment type="function">
    <text evidence="1">Required for formate dehydrogenase (FDH) activity. Acts as a sulfur carrier protein that transfers sulfur from IscS to the molybdenum cofactor prior to its insertion into FDH.</text>
</comment>
<comment type="subcellular location">
    <subcellularLocation>
        <location evidence="1">Cytoplasm</location>
    </subcellularLocation>
</comment>
<comment type="similarity">
    <text evidence="1">Belongs to the FdhD family.</text>
</comment>
<protein>
    <recommendedName>
        <fullName evidence="1">Sulfur carrier protein FdhD</fullName>
    </recommendedName>
</protein>
<proteinExistence type="inferred from homology"/>
<reference key="1">
    <citation type="journal article" date="2011" name="Proc. Natl. Acad. Sci. U.S.A.">
        <title>Genomic anatomy of Escherichia coli O157:H7 outbreaks.</title>
        <authorList>
            <person name="Eppinger M."/>
            <person name="Mammel M.K."/>
            <person name="Leclerc J.E."/>
            <person name="Ravel J."/>
            <person name="Cebula T.A."/>
        </authorList>
    </citation>
    <scope>NUCLEOTIDE SEQUENCE [LARGE SCALE GENOMIC DNA]</scope>
    <source>
        <strain>EC4115 / EHEC</strain>
    </source>
</reference>
<name>FDHD_ECO5E</name>
<keyword id="KW-0963">Cytoplasm</keyword>
<keyword id="KW-0501">Molybdenum cofactor biosynthesis</keyword>
<accession>B5YZ31</accession>